<protein>
    <recommendedName>
        <fullName evidence="1">Holo-[acyl-carrier-protein] synthase</fullName>
        <shortName evidence="1">Holo-ACP synthase</shortName>
        <ecNumber evidence="1">2.7.8.7</ecNumber>
    </recommendedName>
    <alternativeName>
        <fullName evidence="1">4'-phosphopantetheinyl transferase AcpS</fullName>
    </alternativeName>
</protein>
<organism>
    <name type="scientific">Aquifex aeolicus (strain VF5)</name>
    <dbReference type="NCBI Taxonomy" id="224324"/>
    <lineage>
        <taxon>Bacteria</taxon>
        <taxon>Pseudomonadati</taxon>
        <taxon>Aquificota</taxon>
        <taxon>Aquificia</taxon>
        <taxon>Aquificales</taxon>
        <taxon>Aquificaceae</taxon>
        <taxon>Aquifex</taxon>
    </lineage>
</organism>
<name>ACPS_AQUAE</name>
<sequence length="122" mass="14310">MIGVDIVKNERIKDALERFGDKFLDRIYTKRELEYCYAHCDFLPCLAARWAGKEAVLKAFYTEFKIFLRFKEIEILGNRGRPPTVVINREGVEEILKNYEVIVSLSHERDYSVAVAYIKKKS</sequence>
<reference key="1">
    <citation type="journal article" date="1998" name="Nature">
        <title>The complete genome of the hyperthermophilic bacterium Aquifex aeolicus.</title>
        <authorList>
            <person name="Deckert G."/>
            <person name="Warren P.V."/>
            <person name="Gaasterland T."/>
            <person name="Young W.G."/>
            <person name="Lenox A.L."/>
            <person name="Graham D.E."/>
            <person name="Overbeek R."/>
            <person name="Snead M.A."/>
            <person name="Keller M."/>
            <person name="Aujay M."/>
            <person name="Huber R."/>
            <person name="Feldman R.A."/>
            <person name="Short J.M."/>
            <person name="Olsen G.J."/>
            <person name="Swanson R.V."/>
        </authorList>
    </citation>
    <scope>NUCLEOTIDE SEQUENCE [LARGE SCALE GENOMIC DNA]</scope>
    <source>
        <strain>VF5</strain>
    </source>
</reference>
<gene>
    <name evidence="1" type="primary">acpS</name>
    <name type="ordered locus">aq_813</name>
</gene>
<keyword id="KW-0963">Cytoplasm</keyword>
<keyword id="KW-0275">Fatty acid biosynthesis</keyword>
<keyword id="KW-0276">Fatty acid metabolism</keyword>
<keyword id="KW-0444">Lipid biosynthesis</keyword>
<keyword id="KW-0443">Lipid metabolism</keyword>
<keyword id="KW-0460">Magnesium</keyword>
<keyword id="KW-0479">Metal-binding</keyword>
<keyword id="KW-1185">Reference proteome</keyword>
<keyword id="KW-0808">Transferase</keyword>
<proteinExistence type="inferred from homology"/>
<comment type="function">
    <text evidence="1">Transfers the 4'-phosphopantetheine moiety from coenzyme A to a Ser of acyl-carrier-protein.</text>
</comment>
<comment type="catalytic activity">
    <reaction evidence="1">
        <text>apo-[ACP] + CoA = holo-[ACP] + adenosine 3',5'-bisphosphate + H(+)</text>
        <dbReference type="Rhea" id="RHEA:12068"/>
        <dbReference type="Rhea" id="RHEA-COMP:9685"/>
        <dbReference type="Rhea" id="RHEA-COMP:9690"/>
        <dbReference type="ChEBI" id="CHEBI:15378"/>
        <dbReference type="ChEBI" id="CHEBI:29999"/>
        <dbReference type="ChEBI" id="CHEBI:57287"/>
        <dbReference type="ChEBI" id="CHEBI:58343"/>
        <dbReference type="ChEBI" id="CHEBI:64479"/>
        <dbReference type="EC" id="2.7.8.7"/>
    </reaction>
</comment>
<comment type="cofactor">
    <cofactor evidence="1">
        <name>Mg(2+)</name>
        <dbReference type="ChEBI" id="CHEBI:18420"/>
    </cofactor>
</comment>
<comment type="subcellular location">
    <subcellularLocation>
        <location evidence="1">Cytoplasm</location>
    </subcellularLocation>
</comment>
<comment type="similarity">
    <text evidence="1">Belongs to the P-Pant transferase superfamily. AcpS family.</text>
</comment>
<feature type="chain" id="PRO_0000175605" description="Holo-[acyl-carrier-protein] synthase">
    <location>
        <begin position="1"/>
        <end position="122"/>
    </location>
</feature>
<feature type="binding site" evidence="1">
    <location>
        <position position="5"/>
    </location>
    <ligand>
        <name>Mg(2+)</name>
        <dbReference type="ChEBI" id="CHEBI:18420"/>
    </ligand>
</feature>
<feature type="binding site" evidence="1">
    <location>
        <position position="54"/>
    </location>
    <ligand>
        <name>Mg(2+)</name>
        <dbReference type="ChEBI" id="CHEBI:18420"/>
    </ligand>
</feature>
<dbReference type="EC" id="2.7.8.7" evidence="1"/>
<dbReference type="EMBL" id="AE000657">
    <property type="protein sequence ID" value="AAC06947.1"/>
    <property type="molecule type" value="Genomic_DNA"/>
</dbReference>
<dbReference type="PIR" id="H70370">
    <property type="entry name" value="H70370"/>
</dbReference>
<dbReference type="RefSeq" id="NP_213556.1">
    <property type="nucleotide sequence ID" value="NC_000918.1"/>
</dbReference>
<dbReference type="RefSeq" id="WP_010880494.1">
    <property type="nucleotide sequence ID" value="NC_000918.1"/>
</dbReference>
<dbReference type="SMR" id="O66995"/>
<dbReference type="FunCoup" id="O66995">
    <property type="interactions" value="129"/>
</dbReference>
<dbReference type="STRING" id="224324.aq_813"/>
<dbReference type="EnsemblBacteria" id="AAC06947">
    <property type="protein sequence ID" value="AAC06947"/>
    <property type="gene ID" value="aq_813"/>
</dbReference>
<dbReference type="KEGG" id="aae:aq_813"/>
<dbReference type="PATRIC" id="fig|224324.8.peg.641"/>
<dbReference type="eggNOG" id="COG0736">
    <property type="taxonomic scope" value="Bacteria"/>
</dbReference>
<dbReference type="HOGENOM" id="CLU_089696_2_1_0"/>
<dbReference type="InParanoid" id="O66995"/>
<dbReference type="OrthoDB" id="517356at2"/>
<dbReference type="Proteomes" id="UP000000798">
    <property type="component" value="Chromosome"/>
</dbReference>
<dbReference type="GO" id="GO:0005737">
    <property type="term" value="C:cytoplasm"/>
    <property type="evidence" value="ECO:0007669"/>
    <property type="project" value="UniProtKB-SubCell"/>
</dbReference>
<dbReference type="GO" id="GO:0008897">
    <property type="term" value="F:holo-[acyl-carrier-protein] synthase activity"/>
    <property type="evidence" value="ECO:0007669"/>
    <property type="project" value="UniProtKB-UniRule"/>
</dbReference>
<dbReference type="GO" id="GO:0000287">
    <property type="term" value="F:magnesium ion binding"/>
    <property type="evidence" value="ECO:0007669"/>
    <property type="project" value="UniProtKB-UniRule"/>
</dbReference>
<dbReference type="GO" id="GO:0006633">
    <property type="term" value="P:fatty acid biosynthetic process"/>
    <property type="evidence" value="ECO:0007669"/>
    <property type="project" value="UniProtKB-UniRule"/>
</dbReference>
<dbReference type="Gene3D" id="3.90.470.20">
    <property type="entry name" value="4'-phosphopantetheinyl transferase domain"/>
    <property type="match status" value="1"/>
</dbReference>
<dbReference type="HAMAP" id="MF_00101">
    <property type="entry name" value="AcpS"/>
    <property type="match status" value="1"/>
</dbReference>
<dbReference type="InterPro" id="IPR008278">
    <property type="entry name" value="4-PPantetheinyl_Trfase_dom"/>
</dbReference>
<dbReference type="InterPro" id="IPR037143">
    <property type="entry name" value="4-PPantetheinyl_Trfase_dom_sf"/>
</dbReference>
<dbReference type="InterPro" id="IPR002582">
    <property type="entry name" value="ACPS"/>
</dbReference>
<dbReference type="InterPro" id="IPR004568">
    <property type="entry name" value="Ppantetheine-prot_Trfase_dom"/>
</dbReference>
<dbReference type="NCBIfam" id="TIGR00516">
    <property type="entry name" value="acpS"/>
    <property type="match status" value="1"/>
</dbReference>
<dbReference type="NCBIfam" id="TIGR00556">
    <property type="entry name" value="pantethn_trn"/>
    <property type="match status" value="1"/>
</dbReference>
<dbReference type="Pfam" id="PF01648">
    <property type="entry name" value="ACPS"/>
    <property type="match status" value="1"/>
</dbReference>
<dbReference type="SUPFAM" id="SSF56214">
    <property type="entry name" value="4'-phosphopantetheinyl transferase"/>
    <property type="match status" value="1"/>
</dbReference>
<evidence type="ECO:0000255" key="1">
    <source>
        <dbReference type="HAMAP-Rule" id="MF_00101"/>
    </source>
</evidence>
<accession>O66995</accession>